<proteinExistence type="evidence at transcript level"/>
<name>ZN526_MOUSE</name>
<feature type="chain" id="PRO_0000306876" description="Zinc finger protein 526">
    <location>
        <begin position="1"/>
        <end position="675"/>
    </location>
</feature>
<feature type="zinc finger region" description="C2H2-type 1" evidence="2">
    <location>
        <begin position="56"/>
        <end position="78"/>
    </location>
</feature>
<feature type="zinc finger region" description="C2H2-type 2" evidence="2">
    <location>
        <begin position="108"/>
        <end position="130"/>
    </location>
</feature>
<feature type="zinc finger region" description="C2H2-type 3" evidence="2">
    <location>
        <begin position="140"/>
        <end position="163"/>
    </location>
</feature>
<feature type="zinc finger region" description="C2H2-type 4" evidence="2">
    <location>
        <begin position="200"/>
        <end position="222"/>
    </location>
</feature>
<feature type="zinc finger region" description="C2H2-type 5" evidence="2">
    <location>
        <begin position="312"/>
        <end position="334"/>
    </location>
</feature>
<feature type="zinc finger region" description="C2H2-type 6" evidence="2">
    <location>
        <begin position="339"/>
        <end position="361"/>
    </location>
</feature>
<feature type="zinc finger region" description="C2H2-type 7" evidence="2">
    <location>
        <begin position="367"/>
        <end position="389"/>
    </location>
</feature>
<feature type="zinc finger region" description="C2H2-type 8" evidence="2">
    <location>
        <begin position="395"/>
        <end position="416"/>
    </location>
</feature>
<feature type="zinc finger region" description="C2H2-type 9" evidence="2">
    <location>
        <begin position="447"/>
        <end position="470"/>
    </location>
</feature>
<feature type="zinc finger region" description="C2H2-type 10" evidence="2">
    <location>
        <begin position="477"/>
        <end position="499"/>
    </location>
</feature>
<feature type="zinc finger region" description="C2H2-type 11" evidence="2">
    <location>
        <begin position="505"/>
        <end position="527"/>
    </location>
</feature>
<feature type="zinc finger region" description="C2H2-type 12" evidence="2">
    <location>
        <begin position="533"/>
        <end position="555"/>
    </location>
</feature>
<feature type="zinc finger region" description="C2H2-type 13" evidence="2">
    <location>
        <begin position="578"/>
        <end position="600"/>
    </location>
</feature>
<feature type="region of interest" description="Disordered" evidence="3">
    <location>
        <begin position="160"/>
        <end position="195"/>
    </location>
</feature>
<feature type="region of interest" description="Disordered" evidence="3">
    <location>
        <begin position="225"/>
        <end position="283"/>
    </location>
</feature>
<feature type="region of interest" description="Disordered" evidence="3">
    <location>
        <begin position="415"/>
        <end position="439"/>
    </location>
</feature>
<feature type="region of interest" description="Disordered" evidence="3">
    <location>
        <begin position="606"/>
        <end position="625"/>
    </location>
</feature>
<feature type="compositionally biased region" description="Pro residues" evidence="3">
    <location>
        <begin position="171"/>
        <end position="194"/>
    </location>
</feature>
<feature type="compositionally biased region" description="Basic and acidic residues" evidence="3">
    <location>
        <begin position="225"/>
        <end position="234"/>
    </location>
</feature>
<feature type="compositionally biased region" description="Acidic residues" evidence="3">
    <location>
        <begin position="235"/>
        <end position="261"/>
    </location>
</feature>
<feature type="compositionally biased region" description="Polar residues" evidence="3">
    <location>
        <begin position="269"/>
        <end position="281"/>
    </location>
</feature>
<feature type="compositionally biased region" description="Polar residues" evidence="3">
    <location>
        <begin position="418"/>
        <end position="427"/>
    </location>
</feature>
<feature type="compositionally biased region" description="Pro residues" evidence="3">
    <location>
        <begin position="611"/>
        <end position="624"/>
    </location>
</feature>
<feature type="splice variant" id="VSP_028554" description="In isoform 2." evidence="4">
    <original>QLPCPQCP</original>
    <variation>LLLSRLFG</variation>
    <location>
        <begin position="446"/>
        <end position="453"/>
    </location>
</feature>
<feature type="splice variant" id="VSP_028555" description="In isoform 2." evidence="4">
    <location>
        <begin position="454"/>
        <end position="675"/>
    </location>
</feature>
<feature type="sequence conflict" description="In Ref. 1; BAC34772." evidence="5" ref="1">
    <original>T</original>
    <variation>I</variation>
    <location>
        <position position="37"/>
    </location>
</feature>
<comment type="function">
    <text evidence="1">May be involved in transcriptional regulation.</text>
</comment>
<comment type="subcellular location">
    <subcellularLocation>
        <location evidence="5">Nucleus</location>
    </subcellularLocation>
</comment>
<comment type="alternative products">
    <event type="alternative splicing"/>
    <isoform>
        <id>Q8BI66-1</id>
        <name>1</name>
        <sequence type="displayed"/>
    </isoform>
    <isoform>
        <id>Q8BI66-2</id>
        <name>2</name>
        <sequence type="described" ref="VSP_028554 VSP_028555"/>
    </isoform>
</comment>
<comment type="similarity">
    <text evidence="5">Belongs to the krueppel C2H2-type zinc-finger protein family.</text>
</comment>
<comment type="sequence caution" evidence="5">
    <conflict type="frameshift">
        <sequence resource="EMBL-CDS" id="BAC34772"/>
    </conflict>
</comment>
<comment type="sequence caution" evidence="5">
    <conflict type="erroneous initiation">
        <sequence resource="EMBL-CDS" id="BAD32586"/>
    </conflict>
    <text>Extended N-terminus.</text>
</comment>
<comment type="sequence caution" evidence="5">
    <conflict type="miscellaneous discrepancy">
        <sequence resource="EMBL-CDS" id="BAD32586"/>
    </conflict>
    <text>Partially unspliced pre-RNA.</text>
</comment>
<reference key="1">
    <citation type="journal article" date="2005" name="Science">
        <title>The transcriptional landscape of the mammalian genome.</title>
        <authorList>
            <person name="Carninci P."/>
            <person name="Kasukawa T."/>
            <person name="Katayama S."/>
            <person name="Gough J."/>
            <person name="Frith M.C."/>
            <person name="Maeda N."/>
            <person name="Oyama R."/>
            <person name="Ravasi T."/>
            <person name="Lenhard B."/>
            <person name="Wells C."/>
            <person name="Kodzius R."/>
            <person name="Shimokawa K."/>
            <person name="Bajic V.B."/>
            <person name="Brenner S.E."/>
            <person name="Batalov S."/>
            <person name="Forrest A.R."/>
            <person name="Zavolan M."/>
            <person name="Davis M.J."/>
            <person name="Wilming L.G."/>
            <person name="Aidinis V."/>
            <person name="Allen J.E."/>
            <person name="Ambesi-Impiombato A."/>
            <person name="Apweiler R."/>
            <person name="Aturaliya R.N."/>
            <person name="Bailey T.L."/>
            <person name="Bansal M."/>
            <person name="Baxter L."/>
            <person name="Beisel K.W."/>
            <person name="Bersano T."/>
            <person name="Bono H."/>
            <person name="Chalk A.M."/>
            <person name="Chiu K.P."/>
            <person name="Choudhary V."/>
            <person name="Christoffels A."/>
            <person name="Clutterbuck D.R."/>
            <person name="Crowe M.L."/>
            <person name="Dalla E."/>
            <person name="Dalrymple B.P."/>
            <person name="de Bono B."/>
            <person name="Della Gatta G."/>
            <person name="di Bernardo D."/>
            <person name="Down T."/>
            <person name="Engstrom P."/>
            <person name="Fagiolini M."/>
            <person name="Faulkner G."/>
            <person name="Fletcher C.F."/>
            <person name="Fukushima T."/>
            <person name="Furuno M."/>
            <person name="Futaki S."/>
            <person name="Gariboldi M."/>
            <person name="Georgii-Hemming P."/>
            <person name="Gingeras T.R."/>
            <person name="Gojobori T."/>
            <person name="Green R.E."/>
            <person name="Gustincich S."/>
            <person name="Harbers M."/>
            <person name="Hayashi Y."/>
            <person name="Hensch T.K."/>
            <person name="Hirokawa N."/>
            <person name="Hill D."/>
            <person name="Huminiecki L."/>
            <person name="Iacono M."/>
            <person name="Ikeo K."/>
            <person name="Iwama A."/>
            <person name="Ishikawa T."/>
            <person name="Jakt M."/>
            <person name="Kanapin A."/>
            <person name="Katoh M."/>
            <person name="Kawasawa Y."/>
            <person name="Kelso J."/>
            <person name="Kitamura H."/>
            <person name="Kitano H."/>
            <person name="Kollias G."/>
            <person name="Krishnan S.P."/>
            <person name="Kruger A."/>
            <person name="Kummerfeld S.K."/>
            <person name="Kurochkin I.V."/>
            <person name="Lareau L.F."/>
            <person name="Lazarevic D."/>
            <person name="Lipovich L."/>
            <person name="Liu J."/>
            <person name="Liuni S."/>
            <person name="McWilliam S."/>
            <person name="Madan Babu M."/>
            <person name="Madera M."/>
            <person name="Marchionni L."/>
            <person name="Matsuda H."/>
            <person name="Matsuzawa S."/>
            <person name="Miki H."/>
            <person name="Mignone F."/>
            <person name="Miyake S."/>
            <person name="Morris K."/>
            <person name="Mottagui-Tabar S."/>
            <person name="Mulder N."/>
            <person name="Nakano N."/>
            <person name="Nakauchi H."/>
            <person name="Ng P."/>
            <person name="Nilsson R."/>
            <person name="Nishiguchi S."/>
            <person name="Nishikawa S."/>
            <person name="Nori F."/>
            <person name="Ohara O."/>
            <person name="Okazaki Y."/>
            <person name="Orlando V."/>
            <person name="Pang K.C."/>
            <person name="Pavan W.J."/>
            <person name="Pavesi G."/>
            <person name="Pesole G."/>
            <person name="Petrovsky N."/>
            <person name="Piazza S."/>
            <person name="Reed J."/>
            <person name="Reid J.F."/>
            <person name="Ring B.Z."/>
            <person name="Ringwald M."/>
            <person name="Rost B."/>
            <person name="Ruan Y."/>
            <person name="Salzberg S.L."/>
            <person name="Sandelin A."/>
            <person name="Schneider C."/>
            <person name="Schoenbach C."/>
            <person name="Sekiguchi K."/>
            <person name="Semple C.A."/>
            <person name="Seno S."/>
            <person name="Sessa L."/>
            <person name="Sheng Y."/>
            <person name="Shibata Y."/>
            <person name="Shimada H."/>
            <person name="Shimada K."/>
            <person name="Silva D."/>
            <person name="Sinclair B."/>
            <person name="Sperling S."/>
            <person name="Stupka E."/>
            <person name="Sugiura K."/>
            <person name="Sultana R."/>
            <person name="Takenaka Y."/>
            <person name="Taki K."/>
            <person name="Tammoja K."/>
            <person name="Tan S.L."/>
            <person name="Tang S."/>
            <person name="Taylor M.S."/>
            <person name="Tegner J."/>
            <person name="Teichmann S.A."/>
            <person name="Ueda H.R."/>
            <person name="van Nimwegen E."/>
            <person name="Verardo R."/>
            <person name="Wei C.L."/>
            <person name="Yagi K."/>
            <person name="Yamanishi H."/>
            <person name="Zabarovsky E."/>
            <person name="Zhu S."/>
            <person name="Zimmer A."/>
            <person name="Hide W."/>
            <person name="Bult C."/>
            <person name="Grimmond S.M."/>
            <person name="Teasdale R.D."/>
            <person name="Liu E.T."/>
            <person name="Brusic V."/>
            <person name="Quackenbush J."/>
            <person name="Wahlestedt C."/>
            <person name="Mattick J.S."/>
            <person name="Hume D.A."/>
            <person name="Kai C."/>
            <person name="Sasaki D."/>
            <person name="Tomaru Y."/>
            <person name="Fukuda S."/>
            <person name="Kanamori-Katayama M."/>
            <person name="Suzuki M."/>
            <person name="Aoki J."/>
            <person name="Arakawa T."/>
            <person name="Iida J."/>
            <person name="Imamura K."/>
            <person name="Itoh M."/>
            <person name="Kato T."/>
            <person name="Kawaji H."/>
            <person name="Kawagashira N."/>
            <person name="Kawashima T."/>
            <person name="Kojima M."/>
            <person name="Kondo S."/>
            <person name="Konno H."/>
            <person name="Nakano K."/>
            <person name="Ninomiya N."/>
            <person name="Nishio T."/>
            <person name="Okada M."/>
            <person name="Plessy C."/>
            <person name="Shibata K."/>
            <person name="Shiraki T."/>
            <person name="Suzuki S."/>
            <person name="Tagami M."/>
            <person name="Waki K."/>
            <person name="Watahiki A."/>
            <person name="Okamura-Oho Y."/>
            <person name="Suzuki H."/>
            <person name="Kawai J."/>
            <person name="Hayashizaki Y."/>
        </authorList>
    </citation>
    <scope>NUCLEOTIDE SEQUENCE [LARGE SCALE MRNA] (ISOFORM 1)</scope>
    <source>
        <strain>C57BL/6J</strain>
        <tissue>Spinal ganglion</tissue>
    </source>
</reference>
<reference key="2">
    <citation type="journal article" date="2004" name="Genome Res.">
        <title>The status, quality, and expansion of the NIH full-length cDNA project: the Mammalian Gene Collection (MGC).</title>
        <authorList>
            <consortium name="The MGC Project Team"/>
        </authorList>
    </citation>
    <scope>NUCLEOTIDE SEQUENCE [LARGE SCALE MRNA] (ISOFORM 2)</scope>
    <source>
        <strain>129</strain>
        <tissue>Mammary tumor</tissue>
    </source>
</reference>
<reference key="3">
    <citation type="journal article" date="2004" name="DNA Res.">
        <title>Prediction of the coding sequences of mouse homologues of KIAA gene: IV. The complete nucleotide sequences of 500 mouse KIAA-homologous cDNAs identified by screening of terminal sequences of cDNA clones randomly sampled from size-fractionated libraries.</title>
        <authorList>
            <person name="Okazaki N."/>
            <person name="Kikuno R."/>
            <person name="Ohara R."/>
            <person name="Inamoto S."/>
            <person name="Koseki H."/>
            <person name="Hiraoka S."/>
            <person name="Saga Y."/>
            <person name="Seino S."/>
            <person name="Nishimura M."/>
            <person name="Kaisho T."/>
            <person name="Hoshino K."/>
            <person name="Kitamura H."/>
            <person name="Nagase T."/>
            <person name="Ohara O."/>
            <person name="Koga H."/>
        </authorList>
    </citation>
    <scope>NUCLEOTIDE SEQUENCE [LARGE SCALE MRNA] OF 1-433</scope>
    <source>
        <tissue>Pancreatic islet</tissue>
    </source>
</reference>
<evidence type="ECO:0000250" key="1"/>
<evidence type="ECO:0000255" key="2">
    <source>
        <dbReference type="PROSITE-ProRule" id="PRU00042"/>
    </source>
</evidence>
<evidence type="ECO:0000256" key="3">
    <source>
        <dbReference type="SAM" id="MobiDB-lite"/>
    </source>
</evidence>
<evidence type="ECO:0000303" key="4">
    <source>
    </source>
</evidence>
<evidence type="ECO:0000305" key="5"/>
<gene>
    <name type="primary">Znf526</name>
    <name type="synonym">Kiaa1951</name>
    <name type="synonym">Zfp526</name>
</gene>
<protein>
    <recommendedName>
        <fullName>Zinc finger protein 526</fullName>
    </recommendedName>
</protein>
<organism>
    <name type="scientific">Mus musculus</name>
    <name type="common">Mouse</name>
    <dbReference type="NCBI Taxonomy" id="10090"/>
    <lineage>
        <taxon>Eukaryota</taxon>
        <taxon>Metazoa</taxon>
        <taxon>Chordata</taxon>
        <taxon>Craniata</taxon>
        <taxon>Vertebrata</taxon>
        <taxon>Euteleostomi</taxon>
        <taxon>Mammalia</taxon>
        <taxon>Eutheria</taxon>
        <taxon>Euarchontoglires</taxon>
        <taxon>Glires</taxon>
        <taxon>Rodentia</taxon>
        <taxon>Myomorpha</taxon>
        <taxon>Muroidea</taxon>
        <taxon>Muridae</taxon>
        <taxon>Murinae</taxon>
        <taxon>Mus</taxon>
        <taxon>Mus</taxon>
    </lineage>
</organism>
<keyword id="KW-0025">Alternative splicing</keyword>
<keyword id="KW-0238">DNA-binding</keyword>
<keyword id="KW-0479">Metal-binding</keyword>
<keyword id="KW-0539">Nucleus</keyword>
<keyword id="KW-1185">Reference proteome</keyword>
<keyword id="KW-0677">Repeat</keyword>
<keyword id="KW-0804">Transcription</keyword>
<keyword id="KW-0805">Transcription regulation</keyword>
<keyword id="KW-0862">Zinc</keyword>
<keyword id="KW-0863">Zinc-finger</keyword>
<sequence>MAEMVAEAAEIPTQSSGAVEISTAVSGELAEMATAVTEMTSGEALASSLFFQHHQFMCSECGSLYNTLEEVLSHQEQHLLTMSEEETLTTQDAGLEPELVPSTGEGPFQCGECSQLILSPSELLAHQDAHLQESASQIQYQCGDCQELFPSPELWVAHRKTQHLSSAADEPPSPLPPPTPPPPPPPPPPPPPPEVKMEPYECPECSTLCATPEEFLEHQGTHFDSLEKEEHNGLEEEEEDEEEGEEEEDDDDEETDEEEASSELTADDTGSNKSTADSAQSCGDCPQHCTSSGARHKHRRASHGPASATHAFHCSQCQRSFSSANRLVAHGRAHVGGTHECTTCSKVFKKAASLEQHQRLHRGEARYLCVDCGRGFGTELTLVAHRRAHTANPLHRCRCGKTFSNMTKFLYHRRTHTGKSGTPTRVATVSPAPAEPTPPPLPPPAQLPCPQCPKSFASASRLSRHRRAVHGPPERRHRCGVCGKGFKKLVHVRNHLRTHTGERPFQCHSCGKTFASLANLSRHQLTHTGVRPYQCLDCGKRFTQSSNLQQHRRLHLRPVAFARAPRLPITGLYNKSPYYCGTCGRWFRAMAGLRLHQRVHARARSLTLQPPRSPSPVPPPPPEPQQTIMCTELGETIAIIETSQPLALEDTLQLCQAALGASEASGLLQLDTAFV</sequence>
<accession>Q8BI66</accession>
<accession>Q4VA17</accession>
<accession>Q69Z58</accession>
<accession>Q8BIH7</accession>
<dbReference type="EMBL" id="AK050839">
    <property type="protein sequence ID" value="BAC34430.1"/>
    <property type="molecule type" value="mRNA"/>
</dbReference>
<dbReference type="EMBL" id="AK051798">
    <property type="protein sequence ID" value="BAC34772.1"/>
    <property type="status" value="ALT_FRAME"/>
    <property type="molecule type" value="mRNA"/>
</dbReference>
<dbReference type="EMBL" id="BC096589">
    <property type="protein sequence ID" value="AAH96589.1"/>
    <property type="molecule type" value="mRNA"/>
</dbReference>
<dbReference type="EMBL" id="AK173308">
    <property type="protein sequence ID" value="BAD32586.1"/>
    <property type="status" value="ALT_SEQ"/>
    <property type="molecule type" value="Transcribed_RNA"/>
</dbReference>
<dbReference type="CCDS" id="CCDS20975.1">
    <molecule id="Q8BI66-1"/>
</dbReference>
<dbReference type="RefSeq" id="NP_780645.1">
    <molecule id="Q8BI66-1"/>
    <property type="nucleotide sequence ID" value="NM_175436.5"/>
</dbReference>
<dbReference type="RefSeq" id="XP_006539778.1">
    <molecule id="Q8BI66-1"/>
    <property type="nucleotide sequence ID" value="XM_006539715.3"/>
</dbReference>
<dbReference type="RefSeq" id="XP_006539779.1">
    <molecule id="Q8BI66-1"/>
    <property type="nucleotide sequence ID" value="XM_006539716.2"/>
</dbReference>
<dbReference type="SMR" id="Q8BI66"/>
<dbReference type="FunCoup" id="Q8BI66">
    <property type="interactions" value="992"/>
</dbReference>
<dbReference type="STRING" id="10090.ENSMUSP00000053567"/>
<dbReference type="GlyGen" id="Q8BI66">
    <property type="glycosylation" value="3 sites, 1 O-linked glycan (1 site)"/>
</dbReference>
<dbReference type="PhosphoSitePlus" id="Q8BI66"/>
<dbReference type="PaxDb" id="10090-ENSMUSP00000053567"/>
<dbReference type="ProteomicsDB" id="275292">
    <molecule id="Q8BI66-1"/>
</dbReference>
<dbReference type="ProteomicsDB" id="275293">
    <molecule id="Q8BI66-2"/>
</dbReference>
<dbReference type="Antibodypedia" id="30899">
    <property type="antibodies" value="65 antibodies from 15 providers"/>
</dbReference>
<dbReference type="DNASU" id="210172"/>
<dbReference type="Ensembl" id="ENSMUST00000055604.6">
    <molecule id="Q8BI66-1"/>
    <property type="protein sequence ID" value="ENSMUSP00000053567.5"/>
    <property type="gene ID" value="ENSMUSG00000046541.10"/>
</dbReference>
<dbReference type="GeneID" id="210172"/>
<dbReference type="KEGG" id="mmu:210172"/>
<dbReference type="UCSC" id="uc009frw.1">
    <molecule id="Q8BI66-1"/>
    <property type="organism name" value="mouse"/>
</dbReference>
<dbReference type="AGR" id="MGI:2445181"/>
<dbReference type="CTD" id="210172"/>
<dbReference type="MGI" id="MGI:2445181">
    <property type="gene designation" value="Zfp526"/>
</dbReference>
<dbReference type="VEuPathDB" id="HostDB:ENSMUSG00000046541"/>
<dbReference type="eggNOG" id="KOG1721">
    <property type="taxonomic scope" value="Eukaryota"/>
</dbReference>
<dbReference type="GeneTree" id="ENSGT00940000162624"/>
<dbReference type="HOGENOM" id="CLU_002678_24_3_1"/>
<dbReference type="InParanoid" id="Q8BI66"/>
<dbReference type="OMA" id="DGPFQCG"/>
<dbReference type="OrthoDB" id="8922241at2759"/>
<dbReference type="PhylomeDB" id="Q8BI66"/>
<dbReference type="TreeFam" id="TF350791"/>
<dbReference type="BioGRID-ORCS" id="210172">
    <property type="hits" value="4 hits in 80 CRISPR screens"/>
</dbReference>
<dbReference type="ChiTaRS" id="Zfp526">
    <property type="organism name" value="mouse"/>
</dbReference>
<dbReference type="PRO" id="PR:Q8BI66"/>
<dbReference type="Proteomes" id="UP000000589">
    <property type="component" value="Chromosome 7"/>
</dbReference>
<dbReference type="RNAct" id="Q8BI66">
    <property type="molecule type" value="protein"/>
</dbReference>
<dbReference type="Bgee" id="ENSMUSG00000046541">
    <property type="expression patterns" value="Expressed in gastrula and 75 other cell types or tissues"/>
</dbReference>
<dbReference type="GO" id="GO:0005634">
    <property type="term" value="C:nucleus"/>
    <property type="evidence" value="ECO:0007669"/>
    <property type="project" value="UniProtKB-SubCell"/>
</dbReference>
<dbReference type="GO" id="GO:0003677">
    <property type="term" value="F:DNA binding"/>
    <property type="evidence" value="ECO:0007669"/>
    <property type="project" value="UniProtKB-KW"/>
</dbReference>
<dbReference type="GO" id="GO:0008270">
    <property type="term" value="F:zinc ion binding"/>
    <property type="evidence" value="ECO:0007669"/>
    <property type="project" value="UniProtKB-KW"/>
</dbReference>
<dbReference type="FunFam" id="3.30.160.60:FF:004072">
    <property type="match status" value="1"/>
</dbReference>
<dbReference type="FunFam" id="3.30.160.60:FF:000557">
    <property type="entry name" value="zinc finger and SCAN domain-containing protein 29"/>
    <property type="match status" value="1"/>
</dbReference>
<dbReference type="FunFam" id="3.30.160.60:FF:002041">
    <property type="entry name" value="Zinc finger protein 526"/>
    <property type="match status" value="1"/>
</dbReference>
<dbReference type="FunFam" id="3.30.160.60:FF:002659">
    <property type="entry name" value="Zinc finger protein 526"/>
    <property type="match status" value="1"/>
</dbReference>
<dbReference type="Gene3D" id="3.30.160.60">
    <property type="entry name" value="Classic Zinc Finger"/>
    <property type="match status" value="7"/>
</dbReference>
<dbReference type="InterPro" id="IPR036236">
    <property type="entry name" value="Znf_C2H2_sf"/>
</dbReference>
<dbReference type="InterPro" id="IPR013087">
    <property type="entry name" value="Znf_C2H2_type"/>
</dbReference>
<dbReference type="PANTHER" id="PTHR24376:SF243">
    <property type="entry name" value="C2H2-TYPE DOMAIN-CONTAINING PROTEIN"/>
    <property type="match status" value="1"/>
</dbReference>
<dbReference type="PANTHER" id="PTHR24376">
    <property type="entry name" value="ZINC FINGER PROTEIN"/>
    <property type="match status" value="1"/>
</dbReference>
<dbReference type="Pfam" id="PF00096">
    <property type="entry name" value="zf-C2H2"/>
    <property type="match status" value="4"/>
</dbReference>
<dbReference type="Pfam" id="PF13894">
    <property type="entry name" value="zf-C2H2_4"/>
    <property type="match status" value="1"/>
</dbReference>
<dbReference type="SMART" id="SM00355">
    <property type="entry name" value="ZnF_C2H2"/>
    <property type="match status" value="14"/>
</dbReference>
<dbReference type="SUPFAM" id="SSF57667">
    <property type="entry name" value="beta-beta-alpha zinc fingers"/>
    <property type="match status" value="8"/>
</dbReference>
<dbReference type="PROSITE" id="PS00028">
    <property type="entry name" value="ZINC_FINGER_C2H2_1"/>
    <property type="match status" value="13"/>
</dbReference>
<dbReference type="PROSITE" id="PS50157">
    <property type="entry name" value="ZINC_FINGER_C2H2_2"/>
    <property type="match status" value="11"/>
</dbReference>